<feature type="chain" id="PRO_0000285629" description="Coatomer subunit gamma-2">
    <location>
        <begin position="1"/>
        <end position="889"/>
    </location>
</feature>
<feature type="repeat" description="HEAT 1">
    <location>
        <begin position="67"/>
        <end position="102"/>
    </location>
</feature>
<feature type="repeat" description="HEAT 2">
    <location>
        <begin position="103"/>
        <end position="140"/>
    </location>
</feature>
<feature type="repeat" description="HEAT 3">
    <location>
        <begin position="289"/>
        <end position="326"/>
    </location>
</feature>
<feature type="repeat" description="HEAT 4">
    <location>
        <begin position="328"/>
        <end position="360"/>
    </location>
</feature>
<feature type="repeat" description="HEAT 5">
    <location>
        <begin position="361"/>
        <end position="398"/>
    </location>
</feature>
<feature type="region of interest" description="Disordered" evidence="2">
    <location>
        <begin position="596"/>
        <end position="617"/>
    </location>
</feature>
<feature type="sequence conflict" description="In Ref. 5; AK100095." evidence="3" ref="5">
    <original>E</original>
    <variation>K</variation>
    <location>
        <position position="761"/>
    </location>
</feature>
<protein>
    <recommendedName>
        <fullName>Coatomer subunit gamma-2</fullName>
    </recommendedName>
    <alternativeName>
        <fullName>Gamma-2-coat protein</fullName>
        <shortName>Gamma-2-COP</shortName>
    </alternativeName>
</protein>
<organism>
    <name type="scientific">Oryza sativa subsp. japonica</name>
    <name type="common">Rice</name>
    <dbReference type="NCBI Taxonomy" id="39947"/>
    <lineage>
        <taxon>Eukaryota</taxon>
        <taxon>Viridiplantae</taxon>
        <taxon>Streptophyta</taxon>
        <taxon>Embryophyta</taxon>
        <taxon>Tracheophyta</taxon>
        <taxon>Spermatophyta</taxon>
        <taxon>Magnoliopsida</taxon>
        <taxon>Liliopsida</taxon>
        <taxon>Poales</taxon>
        <taxon>Poaceae</taxon>
        <taxon>BOP clade</taxon>
        <taxon>Oryzoideae</taxon>
        <taxon>Oryzeae</taxon>
        <taxon>Oryzinae</taxon>
        <taxon>Oryza</taxon>
        <taxon>Oryza sativa</taxon>
    </lineage>
</organism>
<evidence type="ECO:0000250" key="1"/>
<evidence type="ECO:0000256" key="2">
    <source>
        <dbReference type="SAM" id="MobiDB-lite"/>
    </source>
</evidence>
<evidence type="ECO:0000305" key="3"/>
<evidence type="ECO:0000312" key="4">
    <source>
        <dbReference type="EMBL" id="EEE66759.1"/>
    </source>
</evidence>
<sequence>MAQPLVVKKDDDLDEEEYYSPFLGIEKGAVLQEARVFHDPQLDARRCCQVITKLLYLLNQGDTFTKVEATEVFFATTKLFQSKDAGLRRMVYLMIKELSPSADEVIIVTSSLMKDMNSKTDMYRANAIRVLCRIIDSTLLTQIERYLKQAIVDKNPVVASAALVSGIYLLQTSPEVVKRWSNEVQEAVQSRAALVQFHALALLHQIRQNDRLAVSKLVTSLTRGSVRSPLAQCLLIRYTSQVIRESSMNSQGGDRPFFDFLESCLRNKAEMVILEAARAITELNGVTSRELTPAITVLQLFLSSSKPVLRFAAVRTLNKVASTHPLAVTNCNIDMESLISDQNRSIATLAITTLLKTGNESSVDRLMKQMTNFMSDIADEFKIVVVEAIRSLCLKFPLKYRSLMNFLSNILREEGGFEYKKAIVDSIIILIRDIPDAKESGLFHLCEFIEDCEFTYMSTQILHFLGNEGPKTSDPSKYIRYIYNRVILENATVRASAVSTLAKFGALVDSLKPRIFVLLRRCLFDGDDEVRDRATLYLKLLGGEATVGETEKDVNEFLFGSFDIPLVNLETSLQNYEPSEAPFDISSVSLETKSQPLAEKKTTGKKPTGPASALSGPVPTVDASYEKLLSSIPEFAGFGKLFKSSAPVELTEAETEYSVNVVKHIYDGHVVLQYNCTNTIPEQLLEEVVVFVDASEADEFSEVATKSLRSLPYDSPGQTFVAFEKLEGVLATGKFSNILKFIVKEVDPSTGEADDDGVEDEYQLEDLEITSADYMLKVGVSNFRNAWESMDPESERVDEYGLGARESLAEAVSAVIGILGMQPCEGTDVVPSNSRSHTCLLSGVFIGNVKVLVRLSFGLSGPKEVAMKLAVRSDDPEISDKIHEIVANG</sequence>
<dbReference type="EMBL" id="AP005259">
    <property type="protein sequence ID" value="BAC84213.1"/>
    <property type="molecule type" value="Genomic_DNA"/>
</dbReference>
<dbReference type="EMBL" id="AP008213">
    <property type="protein sequence ID" value="BAF21045.1"/>
    <property type="molecule type" value="Genomic_DNA"/>
</dbReference>
<dbReference type="EMBL" id="AP014963">
    <property type="protein sequence ID" value="BAT00500.1"/>
    <property type="molecule type" value="Genomic_DNA"/>
</dbReference>
<dbReference type="EMBL" id="CM000144">
    <property type="protein sequence ID" value="EEE66759.1"/>
    <property type="molecule type" value="Genomic_DNA"/>
</dbReference>
<dbReference type="EMBL" id="AK100095">
    <property type="status" value="NOT_ANNOTATED_CDS"/>
    <property type="molecule type" value="mRNA"/>
</dbReference>
<dbReference type="RefSeq" id="XP_015647270.1">
    <property type="nucleotide sequence ID" value="XM_015791784.1"/>
</dbReference>
<dbReference type="SMR" id="Q6Z382"/>
<dbReference type="BioGRID" id="811702">
    <property type="interactions" value="1"/>
</dbReference>
<dbReference type="FunCoup" id="Q6Z382">
    <property type="interactions" value="3840"/>
</dbReference>
<dbReference type="STRING" id="39947.Q6Z382"/>
<dbReference type="PaxDb" id="39947-Q6Z382"/>
<dbReference type="EnsemblPlants" id="Os07t0201100-01">
    <property type="protein sequence ID" value="Os07t0201100-01"/>
    <property type="gene ID" value="Os07g0201100"/>
</dbReference>
<dbReference type="Gramene" id="Os07t0201100-01">
    <property type="protein sequence ID" value="Os07t0201100-01"/>
    <property type="gene ID" value="Os07g0201100"/>
</dbReference>
<dbReference type="KEGG" id="dosa:Os07g0201100"/>
<dbReference type="eggNOG" id="KOG1078">
    <property type="taxonomic scope" value="Eukaryota"/>
</dbReference>
<dbReference type="HOGENOM" id="CLU_010353_2_0_1"/>
<dbReference type="InParanoid" id="Q6Z382"/>
<dbReference type="OMA" id="DFIEDCE"/>
<dbReference type="OrthoDB" id="1074925at2759"/>
<dbReference type="Proteomes" id="UP000000763">
    <property type="component" value="Chromosome 7"/>
</dbReference>
<dbReference type="Proteomes" id="UP000007752">
    <property type="component" value="Chromosome 7"/>
</dbReference>
<dbReference type="Proteomes" id="UP000059680">
    <property type="component" value="Chromosome 7"/>
</dbReference>
<dbReference type="GO" id="GO:0030126">
    <property type="term" value="C:COPI vesicle coat"/>
    <property type="evidence" value="ECO:0000318"/>
    <property type="project" value="GO_Central"/>
</dbReference>
<dbReference type="GO" id="GO:0005783">
    <property type="term" value="C:endoplasmic reticulum"/>
    <property type="evidence" value="ECO:0000318"/>
    <property type="project" value="GO_Central"/>
</dbReference>
<dbReference type="GO" id="GO:0005793">
    <property type="term" value="C:endoplasmic reticulum-Golgi intermediate compartment"/>
    <property type="evidence" value="ECO:0000318"/>
    <property type="project" value="GO_Central"/>
</dbReference>
<dbReference type="GO" id="GO:0000139">
    <property type="term" value="C:Golgi membrane"/>
    <property type="evidence" value="ECO:0000318"/>
    <property type="project" value="GO_Central"/>
</dbReference>
<dbReference type="GO" id="GO:0005198">
    <property type="term" value="F:structural molecule activity"/>
    <property type="evidence" value="ECO:0007669"/>
    <property type="project" value="InterPro"/>
</dbReference>
<dbReference type="GO" id="GO:0006888">
    <property type="term" value="P:endoplasmic reticulum to Golgi vesicle-mediated transport"/>
    <property type="evidence" value="ECO:0000318"/>
    <property type="project" value="GO_Central"/>
</dbReference>
<dbReference type="GO" id="GO:0006891">
    <property type="term" value="P:intra-Golgi vesicle-mediated transport"/>
    <property type="evidence" value="ECO:0000318"/>
    <property type="project" value="GO_Central"/>
</dbReference>
<dbReference type="GO" id="GO:0006886">
    <property type="term" value="P:intracellular protein transport"/>
    <property type="evidence" value="ECO:0007669"/>
    <property type="project" value="InterPro"/>
</dbReference>
<dbReference type="GO" id="GO:0009306">
    <property type="term" value="P:protein secretion"/>
    <property type="evidence" value="ECO:0000318"/>
    <property type="project" value="GO_Central"/>
</dbReference>
<dbReference type="FunFam" id="1.25.10.10:FF:000071">
    <property type="entry name" value="Coatomer subunit gamma"/>
    <property type="match status" value="1"/>
</dbReference>
<dbReference type="FunFam" id="1.25.10.10:FF:000078">
    <property type="entry name" value="Coatomer subunit gamma"/>
    <property type="match status" value="1"/>
</dbReference>
<dbReference type="FunFam" id="2.60.40.1480:FF:000002">
    <property type="entry name" value="Coatomer subunit gamma"/>
    <property type="match status" value="1"/>
</dbReference>
<dbReference type="FunFam" id="3.30.310.10:FF:000011">
    <property type="entry name" value="Coatomer subunit gamma"/>
    <property type="match status" value="1"/>
</dbReference>
<dbReference type="Gene3D" id="2.60.40.1480">
    <property type="entry name" value="Coatomer, gamma subunit, appendage domain"/>
    <property type="match status" value="1"/>
</dbReference>
<dbReference type="Gene3D" id="1.25.10.10">
    <property type="entry name" value="Leucine-rich Repeat Variant"/>
    <property type="match status" value="2"/>
</dbReference>
<dbReference type="Gene3D" id="3.30.310.10">
    <property type="entry name" value="TATA-Binding Protein"/>
    <property type="match status" value="1"/>
</dbReference>
<dbReference type="InterPro" id="IPR011989">
    <property type="entry name" value="ARM-like"/>
</dbReference>
<dbReference type="InterPro" id="IPR016024">
    <property type="entry name" value="ARM-type_fold"/>
</dbReference>
<dbReference type="InterPro" id="IPR002553">
    <property type="entry name" value="Clathrin/coatomer_adapt-like_N"/>
</dbReference>
<dbReference type="InterPro" id="IPR013041">
    <property type="entry name" value="Clathrin_app_Ig-like_sf"/>
</dbReference>
<dbReference type="InterPro" id="IPR009028">
    <property type="entry name" value="Coatomer/calthrin_app_sub_C"/>
</dbReference>
<dbReference type="InterPro" id="IPR032154">
    <property type="entry name" value="Coatomer_g_Cpla"/>
</dbReference>
<dbReference type="InterPro" id="IPR017106">
    <property type="entry name" value="Coatomer_gsu"/>
</dbReference>
<dbReference type="InterPro" id="IPR013040">
    <property type="entry name" value="Coatomer_gsu_app_Ig-like_dom"/>
</dbReference>
<dbReference type="InterPro" id="IPR037067">
    <property type="entry name" value="Coatomer_gsu_app_sf"/>
</dbReference>
<dbReference type="InterPro" id="IPR012295">
    <property type="entry name" value="TBP_dom_sf"/>
</dbReference>
<dbReference type="PANTHER" id="PTHR10261">
    <property type="entry name" value="COATOMER SUBUNIT GAMMA"/>
    <property type="match status" value="1"/>
</dbReference>
<dbReference type="PANTHER" id="PTHR10261:SF0">
    <property type="entry name" value="COATOMER SUBUNIT GAMMA-2"/>
    <property type="match status" value="1"/>
</dbReference>
<dbReference type="Pfam" id="PF01602">
    <property type="entry name" value="Adaptin_N"/>
    <property type="match status" value="1"/>
</dbReference>
<dbReference type="Pfam" id="PF16381">
    <property type="entry name" value="Coatomer_g_Cpla"/>
    <property type="match status" value="1"/>
</dbReference>
<dbReference type="Pfam" id="PF08752">
    <property type="entry name" value="COP-gamma_platf"/>
    <property type="match status" value="1"/>
</dbReference>
<dbReference type="PIRSF" id="PIRSF037093">
    <property type="entry name" value="Coatomer_gamma_subunit"/>
    <property type="match status" value="1"/>
</dbReference>
<dbReference type="SUPFAM" id="SSF48371">
    <property type="entry name" value="ARM repeat"/>
    <property type="match status" value="1"/>
</dbReference>
<dbReference type="SUPFAM" id="SSF49348">
    <property type="entry name" value="Clathrin adaptor appendage domain"/>
    <property type="match status" value="1"/>
</dbReference>
<dbReference type="SUPFAM" id="SSF55711">
    <property type="entry name" value="Subdomain of clathrin and coatomer appendage domain"/>
    <property type="match status" value="1"/>
</dbReference>
<name>COPG2_ORYSJ</name>
<comment type="function">
    <text evidence="1">The coatomer is a cytosolic protein complex that binds to dilysine motifs and reversibly associates with Golgi non-clathrin-coated vesicles, which further mediate biosynthetic protein transport from the ER, via the Golgi up to the trans Golgi network. Coatomer complex is required for budding from Golgi membranes, and is essential for the retrograde Golgi-to-ER transport of dilysine-tagged proteins (By similarity).</text>
</comment>
<comment type="subunit">
    <text evidence="1">Oligomeric complex that consists of at least the alpha, beta, beta', gamma, delta, epsilon and zeta subunits.</text>
</comment>
<comment type="subcellular location">
    <subcellularLocation>
        <location evidence="1">Cytoplasm</location>
    </subcellularLocation>
    <subcellularLocation>
        <location evidence="1">Golgi apparatus membrane</location>
        <topology evidence="1">Peripheral membrane protein</topology>
        <orientation evidence="1">Cytoplasmic side</orientation>
    </subcellularLocation>
    <subcellularLocation>
        <location evidence="1">Cytoplasmic vesicle</location>
        <location evidence="1">COPI-coated vesicle membrane</location>
        <topology evidence="1">Peripheral membrane protein</topology>
        <orientation evidence="1">Cytoplasmic side</orientation>
    </subcellularLocation>
    <text evidence="1">The coatomer is cytoplasmic or polymerized on the cytoplasmic side of the Golgi, as well as on the vesicles/buds originating from it.</text>
</comment>
<comment type="similarity">
    <text evidence="3">Belongs to the COPG family.</text>
</comment>
<keyword id="KW-0963">Cytoplasm</keyword>
<keyword id="KW-0968">Cytoplasmic vesicle</keyword>
<keyword id="KW-0931">ER-Golgi transport</keyword>
<keyword id="KW-0333">Golgi apparatus</keyword>
<keyword id="KW-0472">Membrane</keyword>
<keyword id="KW-0653">Protein transport</keyword>
<keyword id="KW-1185">Reference proteome</keyword>
<keyword id="KW-0677">Repeat</keyword>
<keyword id="KW-0813">Transport</keyword>
<gene>
    <name type="ordered locus">Os07g0201100</name>
    <name type="ordered locus">LOC_Os07g10150</name>
    <name evidence="4" type="ORF">OsJ_23473</name>
    <name type="ORF">P0519E02.25</name>
</gene>
<accession>Q6Z382</accession>
<accession>B9FW22</accession>
<proteinExistence type="evidence at transcript level"/>
<reference key="1">
    <citation type="journal article" date="2005" name="Nature">
        <title>The map-based sequence of the rice genome.</title>
        <authorList>
            <consortium name="International rice genome sequencing project (IRGSP)"/>
        </authorList>
    </citation>
    <scope>NUCLEOTIDE SEQUENCE [LARGE SCALE GENOMIC DNA]</scope>
    <source>
        <strain>cv. Nipponbare</strain>
    </source>
</reference>
<reference key="2">
    <citation type="journal article" date="2008" name="Nucleic Acids Res.">
        <title>The rice annotation project database (RAP-DB): 2008 update.</title>
        <authorList>
            <consortium name="The rice annotation project (RAP)"/>
        </authorList>
    </citation>
    <scope>GENOME REANNOTATION</scope>
    <source>
        <strain>cv. Nipponbare</strain>
    </source>
</reference>
<reference key="3">
    <citation type="journal article" date="2013" name="Rice">
        <title>Improvement of the Oryza sativa Nipponbare reference genome using next generation sequence and optical map data.</title>
        <authorList>
            <person name="Kawahara Y."/>
            <person name="de la Bastide M."/>
            <person name="Hamilton J.P."/>
            <person name="Kanamori H."/>
            <person name="McCombie W.R."/>
            <person name="Ouyang S."/>
            <person name="Schwartz D.C."/>
            <person name="Tanaka T."/>
            <person name="Wu J."/>
            <person name="Zhou S."/>
            <person name="Childs K.L."/>
            <person name="Davidson R.M."/>
            <person name="Lin H."/>
            <person name="Quesada-Ocampo L."/>
            <person name="Vaillancourt B."/>
            <person name="Sakai H."/>
            <person name="Lee S.S."/>
            <person name="Kim J."/>
            <person name="Numa H."/>
            <person name="Itoh T."/>
            <person name="Buell C.R."/>
            <person name="Matsumoto T."/>
        </authorList>
    </citation>
    <scope>GENOME REANNOTATION</scope>
    <source>
        <strain>cv. Nipponbare</strain>
    </source>
</reference>
<reference key="4">
    <citation type="journal article" date="2005" name="PLoS Biol.">
        <title>The genomes of Oryza sativa: a history of duplications.</title>
        <authorList>
            <person name="Yu J."/>
            <person name="Wang J."/>
            <person name="Lin W."/>
            <person name="Li S."/>
            <person name="Li H."/>
            <person name="Zhou J."/>
            <person name="Ni P."/>
            <person name="Dong W."/>
            <person name="Hu S."/>
            <person name="Zeng C."/>
            <person name="Zhang J."/>
            <person name="Zhang Y."/>
            <person name="Li R."/>
            <person name="Xu Z."/>
            <person name="Li S."/>
            <person name="Li X."/>
            <person name="Zheng H."/>
            <person name="Cong L."/>
            <person name="Lin L."/>
            <person name="Yin J."/>
            <person name="Geng J."/>
            <person name="Li G."/>
            <person name="Shi J."/>
            <person name="Liu J."/>
            <person name="Lv H."/>
            <person name="Li J."/>
            <person name="Wang J."/>
            <person name="Deng Y."/>
            <person name="Ran L."/>
            <person name="Shi X."/>
            <person name="Wang X."/>
            <person name="Wu Q."/>
            <person name="Li C."/>
            <person name="Ren X."/>
            <person name="Wang J."/>
            <person name="Wang X."/>
            <person name="Li D."/>
            <person name="Liu D."/>
            <person name="Zhang X."/>
            <person name="Ji Z."/>
            <person name="Zhao W."/>
            <person name="Sun Y."/>
            <person name="Zhang Z."/>
            <person name="Bao J."/>
            <person name="Han Y."/>
            <person name="Dong L."/>
            <person name="Ji J."/>
            <person name="Chen P."/>
            <person name="Wu S."/>
            <person name="Liu J."/>
            <person name="Xiao Y."/>
            <person name="Bu D."/>
            <person name="Tan J."/>
            <person name="Yang L."/>
            <person name="Ye C."/>
            <person name="Zhang J."/>
            <person name="Xu J."/>
            <person name="Zhou Y."/>
            <person name="Yu Y."/>
            <person name="Zhang B."/>
            <person name="Zhuang S."/>
            <person name="Wei H."/>
            <person name="Liu B."/>
            <person name="Lei M."/>
            <person name="Yu H."/>
            <person name="Li Y."/>
            <person name="Xu H."/>
            <person name="Wei S."/>
            <person name="He X."/>
            <person name="Fang L."/>
            <person name="Zhang Z."/>
            <person name="Zhang Y."/>
            <person name="Huang X."/>
            <person name="Su Z."/>
            <person name="Tong W."/>
            <person name="Li J."/>
            <person name="Tong Z."/>
            <person name="Li S."/>
            <person name="Ye J."/>
            <person name="Wang L."/>
            <person name="Fang L."/>
            <person name="Lei T."/>
            <person name="Chen C.-S."/>
            <person name="Chen H.-C."/>
            <person name="Xu Z."/>
            <person name="Li H."/>
            <person name="Huang H."/>
            <person name="Zhang F."/>
            <person name="Xu H."/>
            <person name="Li N."/>
            <person name="Zhao C."/>
            <person name="Li S."/>
            <person name="Dong L."/>
            <person name="Huang Y."/>
            <person name="Li L."/>
            <person name="Xi Y."/>
            <person name="Qi Q."/>
            <person name="Li W."/>
            <person name="Zhang B."/>
            <person name="Hu W."/>
            <person name="Zhang Y."/>
            <person name="Tian X."/>
            <person name="Jiao Y."/>
            <person name="Liang X."/>
            <person name="Jin J."/>
            <person name="Gao L."/>
            <person name="Zheng W."/>
            <person name="Hao B."/>
            <person name="Liu S.-M."/>
            <person name="Wang W."/>
            <person name="Yuan L."/>
            <person name="Cao M."/>
            <person name="McDermott J."/>
            <person name="Samudrala R."/>
            <person name="Wang J."/>
            <person name="Wong G.K.-S."/>
            <person name="Yang H."/>
        </authorList>
    </citation>
    <scope>NUCLEOTIDE SEQUENCE [LARGE SCALE GENOMIC DNA]</scope>
    <source>
        <strain>cv. Nipponbare</strain>
    </source>
</reference>
<reference key="5">
    <citation type="journal article" date="2003" name="Science">
        <title>Collection, mapping, and annotation of over 28,000 cDNA clones from japonica rice.</title>
        <authorList>
            <consortium name="The rice full-length cDNA consortium"/>
        </authorList>
    </citation>
    <scope>NUCLEOTIDE SEQUENCE [LARGE SCALE MRNA]</scope>
    <source>
        <strain>cv. Nipponbare</strain>
    </source>
</reference>